<feature type="chain" id="PRO_0000375656" description="Succinyl-diaminopimelate desuccinylase">
    <location>
        <begin position="1"/>
        <end position="383"/>
    </location>
</feature>
<feature type="active site" evidence="1">
    <location>
        <position position="75"/>
    </location>
</feature>
<feature type="active site" description="Proton acceptor" evidence="1">
    <location>
        <position position="141"/>
    </location>
</feature>
<feature type="binding site" evidence="1">
    <location>
        <position position="73"/>
    </location>
    <ligand>
        <name>Zn(2+)</name>
        <dbReference type="ChEBI" id="CHEBI:29105"/>
        <label>1</label>
    </ligand>
</feature>
<feature type="binding site" evidence="1">
    <location>
        <position position="107"/>
    </location>
    <ligand>
        <name>Zn(2+)</name>
        <dbReference type="ChEBI" id="CHEBI:29105"/>
        <label>1</label>
    </ligand>
</feature>
<feature type="binding site" evidence="1">
    <location>
        <position position="107"/>
    </location>
    <ligand>
        <name>Zn(2+)</name>
        <dbReference type="ChEBI" id="CHEBI:29105"/>
        <label>2</label>
    </ligand>
</feature>
<feature type="binding site" evidence="1">
    <location>
        <position position="142"/>
    </location>
    <ligand>
        <name>Zn(2+)</name>
        <dbReference type="ChEBI" id="CHEBI:29105"/>
        <label>2</label>
    </ligand>
</feature>
<feature type="binding site" evidence="1">
    <location>
        <position position="170"/>
    </location>
    <ligand>
        <name>Zn(2+)</name>
        <dbReference type="ChEBI" id="CHEBI:29105"/>
        <label>1</label>
    </ligand>
</feature>
<feature type="binding site" evidence="1">
    <location>
        <position position="356"/>
    </location>
    <ligand>
        <name>Zn(2+)</name>
        <dbReference type="ChEBI" id="CHEBI:29105"/>
        <label>2</label>
    </ligand>
</feature>
<name>DAPE_PSEAB</name>
<reference key="1">
    <citation type="journal article" date="2006" name="Genome Biol.">
        <title>Genomic analysis reveals that Pseudomonas aeruginosa virulence is combinatorial.</title>
        <authorList>
            <person name="Lee D.G."/>
            <person name="Urbach J.M."/>
            <person name="Wu G."/>
            <person name="Liberati N.T."/>
            <person name="Feinbaum R.L."/>
            <person name="Miyata S."/>
            <person name="Diggins L.T."/>
            <person name="He J."/>
            <person name="Saucier M."/>
            <person name="Deziel E."/>
            <person name="Friedman L."/>
            <person name="Li L."/>
            <person name="Grills G."/>
            <person name="Montgomery K."/>
            <person name="Kucherlapati R."/>
            <person name="Rahme L.G."/>
            <person name="Ausubel F.M."/>
        </authorList>
    </citation>
    <scope>NUCLEOTIDE SEQUENCE [LARGE SCALE GENOMIC DNA]</scope>
    <source>
        <strain>UCBPP-PA14</strain>
    </source>
</reference>
<accession>Q02IY2</accession>
<proteinExistence type="inferred from homology"/>
<protein>
    <recommendedName>
        <fullName evidence="1">Succinyl-diaminopimelate desuccinylase</fullName>
        <shortName evidence="1">SDAP desuccinylase</shortName>
        <ecNumber evidence="1">3.5.1.18</ecNumber>
    </recommendedName>
    <alternativeName>
        <fullName evidence="1">N-succinyl-LL-2,6-diaminoheptanedioate amidohydrolase</fullName>
    </alternativeName>
</protein>
<sequence>MTASSPSLSPTLELACELIRRPSVTPLDADCQALMMRRLEAAGFALEPMRIEEVDNFWARRGGDGPVLCFAGHTDVVPTGPLQAWQHQPFDALIDDQGMLCGRGAADMKGSLASMIVAVERFVADHPKHKGAIAFLITSDEEGPAHHGTKAVVERLAARGERLDWCIVGEPSSTSLVGDVVKNGRRGSLGAKLTIRGVQGHVAYPHLAKNPIHLAAPALAELAAEHWDDGNAFFPPTSFQVSNLNSGTGATNVIPGELTALFNFRFSTESTVEGLQKRVEAILDKHGLDWHVEWALSGLPFLTEPGELLDAVAASIRAVTGREARPSTSGGTSDGRFIATMGTQVVELGPVNATIHQVNERVLASDLELLTEIYYQTLVRLLA</sequence>
<gene>
    <name evidence="1" type="primary">dapE</name>
    <name type="ordered locus">PA14_49380</name>
</gene>
<keyword id="KW-0028">Amino-acid biosynthesis</keyword>
<keyword id="KW-0170">Cobalt</keyword>
<keyword id="KW-0220">Diaminopimelate biosynthesis</keyword>
<keyword id="KW-0378">Hydrolase</keyword>
<keyword id="KW-0457">Lysine biosynthesis</keyword>
<keyword id="KW-0479">Metal-binding</keyword>
<keyword id="KW-0862">Zinc</keyword>
<dbReference type="EC" id="3.5.1.18" evidence="1"/>
<dbReference type="EMBL" id="CP000438">
    <property type="protein sequence ID" value="ABJ10330.1"/>
    <property type="molecule type" value="Genomic_DNA"/>
</dbReference>
<dbReference type="RefSeq" id="WP_003140540.1">
    <property type="nucleotide sequence ID" value="NZ_CP034244.1"/>
</dbReference>
<dbReference type="SMR" id="Q02IY2"/>
<dbReference type="KEGG" id="pau:PA14_49380"/>
<dbReference type="PseudoCAP" id="PA14_49380"/>
<dbReference type="HOGENOM" id="CLU_021802_4_0_6"/>
<dbReference type="BioCyc" id="PAER208963:G1G74-4147-MONOMER"/>
<dbReference type="UniPathway" id="UPA00034">
    <property type="reaction ID" value="UER00021"/>
</dbReference>
<dbReference type="Proteomes" id="UP000000653">
    <property type="component" value="Chromosome"/>
</dbReference>
<dbReference type="GO" id="GO:0008777">
    <property type="term" value="F:acetylornithine deacetylase activity"/>
    <property type="evidence" value="ECO:0007669"/>
    <property type="project" value="TreeGrafter"/>
</dbReference>
<dbReference type="GO" id="GO:0050897">
    <property type="term" value="F:cobalt ion binding"/>
    <property type="evidence" value="ECO:0007669"/>
    <property type="project" value="UniProtKB-UniRule"/>
</dbReference>
<dbReference type="GO" id="GO:0009014">
    <property type="term" value="F:succinyl-diaminopimelate desuccinylase activity"/>
    <property type="evidence" value="ECO:0007669"/>
    <property type="project" value="UniProtKB-UniRule"/>
</dbReference>
<dbReference type="GO" id="GO:0008270">
    <property type="term" value="F:zinc ion binding"/>
    <property type="evidence" value="ECO:0007669"/>
    <property type="project" value="UniProtKB-UniRule"/>
</dbReference>
<dbReference type="GO" id="GO:0019877">
    <property type="term" value="P:diaminopimelate biosynthetic process"/>
    <property type="evidence" value="ECO:0007669"/>
    <property type="project" value="UniProtKB-UniRule"/>
</dbReference>
<dbReference type="GO" id="GO:0006526">
    <property type="term" value="P:L-arginine biosynthetic process"/>
    <property type="evidence" value="ECO:0007669"/>
    <property type="project" value="TreeGrafter"/>
</dbReference>
<dbReference type="GO" id="GO:0009089">
    <property type="term" value="P:lysine biosynthetic process via diaminopimelate"/>
    <property type="evidence" value="ECO:0007669"/>
    <property type="project" value="UniProtKB-UniRule"/>
</dbReference>
<dbReference type="CDD" id="cd03891">
    <property type="entry name" value="M20_DapE_proteobac"/>
    <property type="match status" value="1"/>
</dbReference>
<dbReference type="FunFam" id="3.30.70.360:FF:000011">
    <property type="entry name" value="Succinyl-diaminopimelate desuccinylase"/>
    <property type="match status" value="1"/>
</dbReference>
<dbReference type="FunFam" id="3.40.630.10:FF:000005">
    <property type="entry name" value="Succinyl-diaminopimelate desuccinylase"/>
    <property type="match status" value="1"/>
</dbReference>
<dbReference type="FunFam" id="3.40.630.10:FF:000010">
    <property type="entry name" value="Succinyl-diaminopimelate desuccinylase"/>
    <property type="match status" value="1"/>
</dbReference>
<dbReference type="Gene3D" id="3.40.630.10">
    <property type="entry name" value="Zn peptidases"/>
    <property type="match status" value="2"/>
</dbReference>
<dbReference type="HAMAP" id="MF_01690">
    <property type="entry name" value="DapE"/>
    <property type="match status" value="1"/>
</dbReference>
<dbReference type="InterPro" id="IPR001261">
    <property type="entry name" value="ArgE/DapE_CS"/>
</dbReference>
<dbReference type="InterPro" id="IPR036264">
    <property type="entry name" value="Bact_exopeptidase_dim_dom"/>
</dbReference>
<dbReference type="InterPro" id="IPR005941">
    <property type="entry name" value="DapE_proteobac"/>
</dbReference>
<dbReference type="InterPro" id="IPR002933">
    <property type="entry name" value="Peptidase_M20"/>
</dbReference>
<dbReference type="InterPro" id="IPR011650">
    <property type="entry name" value="Peptidase_M20_dimer"/>
</dbReference>
<dbReference type="InterPro" id="IPR050072">
    <property type="entry name" value="Peptidase_M20A"/>
</dbReference>
<dbReference type="NCBIfam" id="TIGR01246">
    <property type="entry name" value="dapE_proteo"/>
    <property type="match status" value="1"/>
</dbReference>
<dbReference type="NCBIfam" id="NF009557">
    <property type="entry name" value="PRK13009.1"/>
    <property type="match status" value="1"/>
</dbReference>
<dbReference type="PANTHER" id="PTHR43808">
    <property type="entry name" value="ACETYLORNITHINE DEACETYLASE"/>
    <property type="match status" value="1"/>
</dbReference>
<dbReference type="PANTHER" id="PTHR43808:SF31">
    <property type="entry name" value="N-ACETYL-L-CITRULLINE DEACETYLASE"/>
    <property type="match status" value="1"/>
</dbReference>
<dbReference type="Pfam" id="PF07687">
    <property type="entry name" value="M20_dimer"/>
    <property type="match status" value="1"/>
</dbReference>
<dbReference type="Pfam" id="PF01546">
    <property type="entry name" value="Peptidase_M20"/>
    <property type="match status" value="1"/>
</dbReference>
<dbReference type="SUPFAM" id="SSF55031">
    <property type="entry name" value="Bacterial exopeptidase dimerisation domain"/>
    <property type="match status" value="1"/>
</dbReference>
<dbReference type="SUPFAM" id="SSF53187">
    <property type="entry name" value="Zn-dependent exopeptidases"/>
    <property type="match status" value="1"/>
</dbReference>
<dbReference type="PROSITE" id="PS00759">
    <property type="entry name" value="ARGE_DAPE_CPG2_2"/>
    <property type="match status" value="1"/>
</dbReference>
<evidence type="ECO:0000255" key="1">
    <source>
        <dbReference type="HAMAP-Rule" id="MF_01690"/>
    </source>
</evidence>
<organism>
    <name type="scientific">Pseudomonas aeruginosa (strain UCBPP-PA14)</name>
    <dbReference type="NCBI Taxonomy" id="208963"/>
    <lineage>
        <taxon>Bacteria</taxon>
        <taxon>Pseudomonadati</taxon>
        <taxon>Pseudomonadota</taxon>
        <taxon>Gammaproteobacteria</taxon>
        <taxon>Pseudomonadales</taxon>
        <taxon>Pseudomonadaceae</taxon>
        <taxon>Pseudomonas</taxon>
    </lineage>
</organism>
<comment type="function">
    <text evidence="1">Catalyzes the hydrolysis of N-succinyl-L,L-diaminopimelic acid (SDAP), forming succinate and LL-2,6-diaminopimelate (DAP), an intermediate involved in the bacterial biosynthesis of lysine and meso-diaminopimelic acid, an essential component of bacterial cell walls.</text>
</comment>
<comment type="catalytic activity">
    <reaction evidence="1">
        <text>N-succinyl-(2S,6S)-2,6-diaminopimelate + H2O = (2S,6S)-2,6-diaminopimelate + succinate</text>
        <dbReference type="Rhea" id="RHEA:22608"/>
        <dbReference type="ChEBI" id="CHEBI:15377"/>
        <dbReference type="ChEBI" id="CHEBI:30031"/>
        <dbReference type="ChEBI" id="CHEBI:57609"/>
        <dbReference type="ChEBI" id="CHEBI:58087"/>
        <dbReference type="EC" id="3.5.1.18"/>
    </reaction>
</comment>
<comment type="cofactor">
    <cofactor evidence="1">
        <name>Zn(2+)</name>
        <dbReference type="ChEBI" id="CHEBI:29105"/>
    </cofactor>
    <cofactor evidence="1">
        <name>Co(2+)</name>
        <dbReference type="ChEBI" id="CHEBI:48828"/>
    </cofactor>
    <text evidence="1">Binds 2 Zn(2+) or Co(2+) ions per subunit.</text>
</comment>
<comment type="pathway">
    <text evidence="1">Amino-acid biosynthesis; L-lysine biosynthesis via DAP pathway; LL-2,6-diaminopimelate from (S)-tetrahydrodipicolinate (succinylase route): step 3/3.</text>
</comment>
<comment type="subunit">
    <text evidence="1">Homodimer.</text>
</comment>
<comment type="similarity">
    <text evidence="1">Belongs to the peptidase M20A family. DapE subfamily.</text>
</comment>